<sequence>MLLHLCSVKNLYQNRFLGLAAMASPSRNSQSRRRCKEPLRYSYNPDQFHNIDIRNGAHDAITIPRSTSDTDLVTSDSRSTLMVSSSYYSIGHSQDLVIHWDIKEEVDAGDWIGMYLIGEVSSENFLDYKNRGVNGSHRGQIIWKIDASSYFVESETKICFKYYHGVSGALRATTPSVTVKNSAAPIFKGIGSEETAQSQGSRRLISFSLSDFQAMGLKKGMFFNPDPYLKISIQPGKHSIFPALPHHGQERRSTIIGNTVNPIWQAEHFSFVSLPTDVLEIEVKDKFAKSRPIIKRFLGKLSMPVQRLLERHAIGDRVVSYTLGRRLPTDHVSGQLQFRFEITSSIHADDEEISLSAEPESSAETQDSIMNSMVGNSNGEPSGDATEFCKDAKPESPSEGNGVNSSENQNQEHAGPVEEAAGAMEARDGSNVSEAPEEPGELQDPEQHDTQPTLSAEEVAEGLPLDEDSPSSLLPEENTALGSKVEEETVPENGAREEEMQKGKDEEEEEEDVSTLEQGEPGLELRVSVRKKSRPCSLPVSELETVIASACGDAETPRTHYIRIHTLLHSMPSAQRGSTTEEEDGLEEESTLKESSEKDGLSEVDTIAADPQSMEDGESDGATLCMAPSDCSGGHFSSLSKGIGAGQDGEAHPSTGSESDSSPQQGADHSCEGCDASCCSPSCYSTSCYSSSCYSSSCYSSSCYNGNNRFASHTRFSSVDSAKISESTVFSSQEDEEEENSAFESVPDSVQSPELDPESTNGAGPWQDELAAPGGNAARSTEGLESPMAGPSNRREGECPILHNSQPISQLPSLRPEHHHYPTIDEPLPPNWEARIDSHGRVFYVDHINRTTTWQRPSMAPTPDGMIRSGSVHQMEQLNRRYQNIQRTMATERAEEDSGNQNSEQIPDGGGGGGGGSDSEAESSQSSLDLRREGSLSPVNSQKVTLLLQSPAVKFITNPEFFTVLHANYSAYRVFTSSTCLKHMILKVRRDARNFERYQHNRDLVNFINMFADTRLELPRGWEIKTDHQGKSFFVDHNSRATTFIDPRIPLQNGRLPNHLTHRQHLQRLRSYSAGEASEVSRNRGASLLARPGHSLIAAIRSQHQHESLPLAYNDKIVAFLRQPNIFEMLQERQPSLARNHTLREKIHYIRTEGNHGLDKLSCDADLVILLSLFEEEIMSYVPLQSAFHPGYSFSPRCSPCSSPQNSPGLQRASARAPSPYRRDFEAKLRNFYRKLEAKGFGQGPGKIKLIIRRDHLLEGTFNQVMAYSRKELQRNKLYITFVGEEGLDYSGPSREFFFLLSQELFNPYYGLFEYSANDTYTVQISPMSAFVENYLEWFRFSGRILGLALIHQYLLDAFFTRPFYKGLLKLPCDLSDLEYLDEEFHQSLQWMKDNNITDILDLTFTVNEEVFGQVTERELKSGGANTQVTEKNKKEYIERMVKWRVERGVVQQTEALLRGFYEVVDSRLVSVFDARELELVIAGTAEIDLNDWRNNTEYRGGYHDGHLVIRWFWAAVERFNNEQRLRLLQFVTGTSSVPYEGFAALRGSNGLRRFCIEKWGKITSLPRAHTCFNRLDLPPYPSYSMLYEKLLTAVEETSTFGLE</sequence>
<name>HECW1_MOUSE</name>
<proteinExistence type="evidence at protein level"/>
<evidence type="ECO:0000250" key="1"/>
<evidence type="ECO:0000255" key="2"/>
<evidence type="ECO:0000255" key="3">
    <source>
        <dbReference type="PROSITE-ProRule" id="PRU00041"/>
    </source>
</evidence>
<evidence type="ECO:0000255" key="4">
    <source>
        <dbReference type="PROSITE-ProRule" id="PRU00104"/>
    </source>
</evidence>
<evidence type="ECO:0000255" key="5">
    <source>
        <dbReference type="PROSITE-ProRule" id="PRU00224"/>
    </source>
</evidence>
<evidence type="ECO:0000256" key="6">
    <source>
        <dbReference type="SAM" id="MobiDB-lite"/>
    </source>
</evidence>
<evidence type="ECO:0000269" key="7">
    <source>
    </source>
</evidence>
<evidence type="ECO:0000303" key="8">
    <source>
    </source>
</evidence>
<evidence type="ECO:0000303" key="9">
    <source>
    </source>
</evidence>
<evidence type="ECO:0000305" key="10"/>
<evidence type="ECO:0007744" key="11">
    <source>
    </source>
</evidence>
<protein>
    <recommendedName>
        <fullName>E3 ubiquitin-protein ligase HECW1</fullName>
        <ecNumber>2.3.2.26</ecNumber>
    </recommendedName>
    <alternativeName>
        <fullName>HECT, C2 and WW domain-containing protein 1</fullName>
    </alternativeName>
    <alternativeName>
        <fullName>HECT-type E3 ubiquitin transferase HECW1</fullName>
    </alternativeName>
    <alternativeName>
        <fullName>NEDD4-like E3 ubiquitin-protein ligase 1</fullName>
        <shortName>mNEDL1</shortName>
    </alternativeName>
</protein>
<gene>
    <name type="primary">Hecw1</name>
    <name type="synonym">Kiaa0322</name>
    <name type="synonym">Nedl1</name>
</gene>
<feature type="chain" id="PRO_0000277666" description="E3 ubiquitin-protein ligase HECW1">
    <location>
        <begin position="1"/>
        <end position="1604"/>
    </location>
</feature>
<feature type="domain" description="C2" evidence="3">
    <location>
        <begin position="182"/>
        <end position="318"/>
    </location>
</feature>
<feature type="domain" description="WW 1" evidence="5">
    <location>
        <begin position="826"/>
        <end position="859"/>
    </location>
</feature>
<feature type="domain" description="WW 2" evidence="5">
    <location>
        <begin position="1016"/>
        <end position="1049"/>
    </location>
</feature>
<feature type="domain" description="HECT" evidence="4">
    <location>
        <begin position="1269"/>
        <end position="1604"/>
    </location>
</feature>
<feature type="region of interest" description="Disordered" evidence="6">
    <location>
        <begin position="350"/>
        <end position="539"/>
    </location>
</feature>
<feature type="region of interest" description="Disordered" evidence="6">
    <location>
        <begin position="572"/>
        <end position="604"/>
    </location>
</feature>
<feature type="region of interest" description="Disordered" evidence="6">
    <location>
        <begin position="642"/>
        <end position="667"/>
    </location>
</feature>
<feature type="region of interest" description="Disordered" evidence="6">
    <location>
        <begin position="727"/>
        <end position="826"/>
    </location>
</feature>
<feature type="region of interest" description="Disordered" evidence="6">
    <location>
        <begin position="890"/>
        <end position="936"/>
    </location>
</feature>
<feature type="coiled-coil region" evidence="2">
    <location>
        <begin position="871"/>
        <end position="898"/>
    </location>
</feature>
<feature type="compositionally biased region" description="Polar residues" evidence="6">
    <location>
        <begin position="362"/>
        <end position="380"/>
    </location>
</feature>
<feature type="compositionally biased region" description="Basic and acidic residues" evidence="6">
    <location>
        <begin position="387"/>
        <end position="396"/>
    </location>
</feature>
<feature type="compositionally biased region" description="Polar residues" evidence="6">
    <location>
        <begin position="398"/>
        <end position="412"/>
    </location>
</feature>
<feature type="compositionally biased region" description="Acidic residues" evidence="6">
    <location>
        <begin position="435"/>
        <end position="444"/>
    </location>
</feature>
<feature type="compositionally biased region" description="Acidic residues" evidence="6">
    <location>
        <begin position="458"/>
        <end position="469"/>
    </location>
</feature>
<feature type="compositionally biased region" description="Basic and acidic residues" evidence="6">
    <location>
        <begin position="494"/>
        <end position="505"/>
    </location>
</feature>
<feature type="compositionally biased region" description="Acidic residues" evidence="6">
    <location>
        <begin position="580"/>
        <end position="589"/>
    </location>
</feature>
<feature type="compositionally biased region" description="Basic and acidic residues" evidence="6">
    <location>
        <begin position="590"/>
        <end position="601"/>
    </location>
</feature>
<feature type="compositionally biased region" description="Polar residues" evidence="6">
    <location>
        <begin position="654"/>
        <end position="667"/>
    </location>
</feature>
<feature type="compositionally biased region" description="Polar residues" evidence="6">
    <location>
        <begin position="748"/>
        <end position="762"/>
    </location>
</feature>
<feature type="compositionally biased region" description="Polar residues" evidence="6">
    <location>
        <begin position="803"/>
        <end position="812"/>
    </location>
</feature>
<feature type="compositionally biased region" description="Gly residues" evidence="6">
    <location>
        <begin position="908"/>
        <end position="917"/>
    </location>
</feature>
<feature type="active site" description="Glycyl thioester intermediate" evidence="4">
    <location>
        <position position="1572"/>
    </location>
</feature>
<feature type="modified residue" description="Phosphoserine" evidence="11">
    <location>
        <position position="871"/>
    </location>
</feature>
<feature type="modified residue" description="Phosphoserine" evidence="11">
    <location>
        <position position="935"/>
    </location>
</feature>
<feature type="modified residue" description="Phosphoserine" evidence="11">
    <location>
        <position position="937"/>
    </location>
</feature>
<feature type="splice variant" id="VSP_023074" description="In isoform 3." evidence="9">
    <original>MLLHLCSV</original>
    <variation>MICAQLEAA</variation>
    <location>
        <begin position="1"/>
        <end position="8"/>
    </location>
</feature>
<feature type="splice variant" id="VSP_023075" description="In isoform 3 and isoform 4." evidence="9">
    <location>
        <begin position="316"/>
        <end position="1604"/>
    </location>
</feature>
<feature type="splice variant" id="VSP_023076" description="In isoform 2." evidence="8">
    <location>
        <begin position="782"/>
        <end position="795"/>
    </location>
</feature>
<feature type="sequence conflict" description="In Ref. 3; BAB97389." evidence="10" ref="3">
    <original>S</original>
    <variation>R</variation>
    <location>
        <position position="167"/>
    </location>
</feature>
<feature type="sequence conflict" description="In Ref. 3; BAB97389." evidence="10" ref="3">
    <original>T</original>
    <variation>A</variation>
    <location>
        <position position="823"/>
    </location>
</feature>
<feature type="sequence conflict" description="In Ref. 3; BAB97389." evidence="10" ref="3">
    <original>D</original>
    <variation>G</variation>
    <location>
        <position position="1036"/>
    </location>
</feature>
<feature type="sequence conflict" description="In Ref. 3; BAB97389." evidence="10" ref="3">
    <original>I</original>
    <variation>V</variation>
    <location>
        <position position="1248"/>
    </location>
</feature>
<feature type="sequence conflict" description="In Ref. 3; BAB97389." evidence="10" ref="3">
    <original>L</original>
    <variation>P</variation>
    <location>
        <position position="1356"/>
    </location>
</feature>
<feature type="sequence conflict" description="In Ref. 3; BAB97389." evidence="10" ref="3">
    <original>V</original>
    <variation>M</variation>
    <location>
        <position position="1538"/>
    </location>
</feature>
<keyword id="KW-0025">Alternative splicing</keyword>
<keyword id="KW-0175">Coiled coil</keyword>
<keyword id="KW-0963">Cytoplasm</keyword>
<keyword id="KW-0597">Phosphoprotein</keyword>
<keyword id="KW-1185">Reference proteome</keyword>
<keyword id="KW-0677">Repeat</keyword>
<keyword id="KW-0808">Transferase</keyword>
<keyword id="KW-0833">Ubl conjugation pathway</keyword>
<accession>Q8K4P8</accession>
<accession>D3YZ67</accession>
<accession>Q6A086</accession>
<accession>Q8BIA6</accession>
<accession>Q8BKC2</accession>
<accession>Q8BKL3</accession>
<accession>Q8BKZ8</accession>
<organism>
    <name type="scientific">Mus musculus</name>
    <name type="common">Mouse</name>
    <dbReference type="NCBI Taxonomy" id="10090"/>
    <lineage>
        <taxon>Eukaryota</taxon>
        <taxon>Metazoa</taxon>
        <taxon>Chordata</taxon>
        <taxon>Craniata</taxon>
        <taxon>Vertebrata</taxon>
        <taxon>Euteleostomi</taxon>
        <taxon>Mammalia</taxon>
        <taxon>Eutheria</taxon>
        <taxon>Euarchontoglires</taxon>
        <taxon>Glires</taxon>
        <taxon>Rodentia</taxon>
        <taxon>Myomorpha</taxon>
        <taxon>Muroidea</taxon>
        <taxon>Muridae</taxon>
        <taxon>Murinae</taxon>
        <taxon>Mus</taxon>
        <taxon>Mus</taxon>
    </lineage>
</organism>
<comment type="function">
    <text evidence="1 7">E3 ubiquitin-protein ligase that mediates ubiquitination and subsequent degradation of DVL1.</text>
</comment>
<comment type="catalytic activity">
    <reaction>
        <text>S-ubiquitinyl-[E2 ubiquitin-conjugating enzyme]-L-cysteine + [acceptor protein]-L-lysine = [E2 ubiquitin-conjugating enzyme]-L-cysteine + N(6)-ubiquitinyl-[acceptor protein]-L-lysine.</text>
        <dbReference type="EC" id="2.3.2.26"/>
    </reaction>
</comment>
<comment type="pathway">
    <text>Protein modification; protein ubiquitination.</text>
</comment>
<comment type="subunit">
    <text evidence="1">Interacts with DVL1 and SSR3.</text>
</comment>
<comment type="subcellular location">
    <subcellularLocation>
        <location evidence="7">Cytoplasm</location>
    </subcellularLocation>
</comment>
<comment type="alternative products">
    <event type="alternative splicing"/>
    <isoform>
        <id>Q8K4P8-1</id>
        <name>1</name>
        <sequence type="displayed"/>
    </isoform>
    <isoform>
        <id>Q8K4P8-2</id>
        <name>2</name>
        <sequence type="described" ref="VSP_023076"/>
    </isoform>
    <isoform>
        <id>Q8K4P8-3</id>
        <name>3</name>
        <sequence type="described" ref="VSP_023074 VSP_023075"/>
    </isoform>
    <isoform>
        <id>Q8K4P8-4</id>
        <name>4</name>
        <sequence type="described" ref="VSP_023075"/>
    </isoform>
    <text>Named isoforms=2.</text>
</comment>
<comment type="tissue specificity">
    <text>Predominantly expressed in neurons of the spinal cord.</text>
</comment>
<comment type="sequence caution" evidence="10">
    <conflict type="erroneous initiation">
        <sequence resource="EMBL-CDS" id="BAC28516"/>
    </conflict>
</comment>
<reference key="1">
    <citation type="journal article" date="2005" name="Science">
        <title>The transcriptional landscape of the mammalian genome.</title>
        <authorList>
            <person name="Carninci P."/>
            <person name="Kasukawa T."/>
            <person name="Katayama S."/>
            <person name="Gough J."/>
            <person name="Frith M.C."/>
            <person name="Maeda N."/>
            <person name="Oyama R."/>
            <person name="Ravasi T."/>
            <person name="Lenhard B."/>
            <person name="Wells C."/>
            <person name="Kodzius R."/>
            <person name="Shimokawa K."/>
            <person name="Bajic V.B."/>
            <person name="Brenner S.E."/>
            <person name="Batalov S."/>
            <person name="Forrest A.R."/>
            <person name="Zavolan M."/>
            <person name="Davis M.J."/>
            <person name="Wilming L.G."/>
            <person name="Aidinis V."/>
            <person name="Allen J.E."/>
            <person name="Ambesi-Impiombato A."/>
            <person name="Apweiler R."/>
            <person name="Aturaliya R.N."/>
            <person name="Bailey T.L."/>
            <person name="Bansal M."/>
            <person name="Baxter L."/>
            <person name="Beisel K.W."/>
            <person name="Bersano T."/>
            <person name="Bono H."/>
            <person name="Chalk A.M."/>
            <person name="Chiu K.P."/>
            <person name="Choudhary V."/>
            <person name="Christoffels A."/>
            <person name="Clutterbuck D.R."/>
            <person name="Crowe M.L."/>
            <person name="Dalla E."/>
            <person name="Dalrymple B.P."/>
            <person name="de Bono B."/>
            <person name="Della Gatta G."/>
            <person name="di Bernardo D."/>
            <person name="Down T."/>
            <person name="Engstrom P."/>
            <person name="Fagiolini M."/>
            <person name="Faulkner G."/>
            <person name="Fletcher C.F."/>
            <person name="Fukushima T."/>
            <person name="Furuno M."/>
            <person name="Futaki S."/>
            <person name="Gariboldi M."/>
            <person name="Georgii-Hemming P."/>
            <person name="Gingeras T.R."/>
            <person name="Gojobori T."/>
            <person name="Green R.E."/>
            <person name="Gustincich S."/>
            <person name="Harbers M."/>
            <person name="Hayashi Y."/>
            <person name="Hensch T.K."/>
            <person name="Hirokawa N."/>
            <person name="Hill D."/>
            <person name="Huminiecki L."/>
            <person name="Iacono M."/>
            <person name="Ikeo K."/>
            <person name="Iwama A."/>
            <person name="Ishikawa T."/>
            <person name="Jakt M."/>
            <person name="Kanapin A."/>
            <person name="Katoh M."/>
            <person name="Kawasawa Y."/>
            <person name="Kelso J."/>
            <person name="Kitamura H."/>
            <person name="Kitano H."/>
            <person name="Kollias G."/>
            <person name="Krishnan S.P."/>
            <person name="Kruger A."/>
            <person name="Kummerfeld S.K."/>
            <person name="Kurochkin I.V."/>
            <person name="Lareau L.F."/>
            <person name="Lazarevic D."/>
            <person name="Lipovich L."/>
            <person name="Liu J."/>
            <person name="Liuni S."/>
            <person name="McWilliam S."/>
            <person name="Madan Babu M."/>
            <person name="Madera M."/>
            <person name="Marchionni L."/>
            <person name="Matsuda H."/>
            <person name="Matsuzawa S."/>
            <person name="Miki H."/>
            <person name="Mignone F."/>
            <person name="Miyake S."/>
            <person name="Morris K."/>
            <person name="Mottagui-Tabar S."/>
            <person name="Mulder N."/>
            <person name="Nakano N."/>
            <person name="Nakauchi H."/>
            <person name="Ng P."/>
            <person name="Nilsson R."/>
            <person name="Nishiguchi S."/>
            <person name="Nishikawa S."/>
            <person name="Nori F."/>
            <person name="Ohara O."/>
            <person name="Okazaki Y."/>
            <person name="Orlando V."/>
            <person name="Pang K.C."/>
            <person name="Pavan W.J."/>
            <person name="Pavesi G."/>
            <person name="Pesole G."/>
            <person name="Petrovsky N."/>
            <person name="Piazza S."/>
            <person name="Reed J."/>
            <person name="Reid J.F."/>
            <person name="Ring B.Z."/>
            <person name="Ringwald M."/>
            <person name="Rost B."/>
            <person name="Ruan Y."/>
            <person name="Salzberg S.L."/>
            <person name="Sandelin A."/>
            <person name="Schneider C."/>
            <person name="Schoenbach C."/>
            <person name="Sekiguchi K."/>
            <person name="Semple C.A."/>
            <person name="Seno S."/>
            <person name="Sessa L."/>
            <person name="Sheng Y."/>
            <person name="Shibata Y."/>
            <person name="Shimada H."/>
            <person name="Shimada K."/>
            <person name="Silva D."/>
            <person name="Sinclair B."/>
            <person name="Sperling S."/>
            <person name="Stupka E."/>
            <person name="Sugiura K."/>
            <person name="Sultana R."/>
            <person name="Takenaka Y."/>
            <person name="Taki K."/>
            <person name="Tammoja K."/>
            <person name="Tan S.L."/>
            <person name="Tang S."/>
            <person name="Taylor M.S."/>
            <person name="Tegner J."/>
            <person name="Teichmann S.A."/>
            <person name="Ueda H.R."/>
            <person name="van Nimwegen E."/>
            <person name="Verardo R."/>
            <person name="Wei C.L."/>
            <person name="Yagi K."/>
            <person name="Yamanishi H."/>
            <person name="Zabarovsky E."/>
            <person name="Zhu S."/>
            <person name="Zimmer A."/>
            <person name="Hide W."/>
            <person name="Bult C."/>
            <person name="Grimmond S.M."/>
            <person name="Teasdale R.D."/>
            <person name="Liu E.T."/>
            <person name="Brusic V."/>
            <person name="Quackenbush J."/>
            <person name="Wahlestedt C."/>
            <person name="Mattick J.S."/>
            <person name="Hume D.A."/>
            <person name="Kai C."/>
            <person name="Sasaki D."/>
            <person name="Tomaru Y."/>
            <person name="Fukuda S."/>
            <person name="Kanamori-Katayama M."/>
            <person name="Suzuki M."/>
            <person name="Aoki J."/>
            <person name="Arakawa T."/>
            <person name="Iida J."/>
            <person name="Imamura K."/>
            <person name="Itoh M."/>
            <person name="Kato T."/>
            <person name="Kawaji H."/>
            <person name="Kawagashira N."/>
            <person name="Kawashima T."/>
            <person name="Kojima M."/>
            <person name="Kondo S."/>
            <person name="Konno H."/>
            <person name="Nakano K."/>
            <person name="Ninomiya N."/>
            <person name="Nishio T."/>
            <person name="Okada M."/>
            <person name="Plessy C."/>
            <person name="Shibata K."/>
            <person name="Shiraki T."/>
            <person name="Suzuki S."/>
            <person name="Tagami M."/>
            <person name="Waki K."/>
            <person name="Watahiki A."/>
            <person name="Okamura-Oho Y."/>
            <person name="Suzuki H."/>
            <person name="Kawai J."/>
            <person name="Hayashizaki Y."/>
        </authorList>
    </citation>
    <scope>NUCLEOTIDE SEQUENCE [LARGE SCALE MRNA] (ISOFORMS 3 AND 4)</scope>
    <scope>NUCLEOTIDE SEQUENCE [LARGE SCALE MRNA] OF 1212-1604 (ISOFORM 1)</scope>
    <source>
        <strain>C57BL/6J</strain>
        <tissue>Corpus striatum</tissue>
        <tissue>Diencephalon</tissue>
        <tissue>Eye</tissue>
    </source>
</reference>
<reference key="2">
    <citation type="journal article" date="2009" name="PLoS Biol.">
        <title>Lineage-specific biology revealed by a finished genome assembly of the mouse.</title>
        <authorList>
            <person name="Church D.M."/>
            <person name="Goodstadt L."/>
            <person name="Hillier L.W."/>
            <person name="Zody M.C."/>
            <person name="Goldstein S."/>
            <person name="She X."/>
            <person name="Bult C.J."/>
            <person name="Agarwala R."/>
            <person name="Cherry J.L."/>
            <person name="DiCuccio M."/>
            <person name="Hlavina W."/>
            <person name="Kapustin Y."/>
            <person name="Meric P."/>
            <person name="Maglott D."/>
            <person name="Birtle Z."/>
            <person name="Marques A.C."/>
            <person name="Graves T."/>
            <person name="Zhou S."/>
            <person name="Teague B."/>
            <person name="Potamousis K."/>
            <person name="Churas C."/>
            <person name="Place M."/>
            <person name="Herschleb J."/>
            <person name="Runnheim R."/>
            <person name="Forrest D."/>
            <person name="Amos-Landgraf J."/>
            <person name="Schwartz D.C."/>
            <person name="Cheng Z."/>
            <person name="Lindblad-Toh K."/>
            <person name="Eichler E.E."/>
            <person name="Ponting C.P."/>
        </authorList>
    </citation>
    <scope>NUCLEOTIDE SEQUENCE [LARGE SCALE GENOMIC DNA]</scope>
    <source>
        <strain>C57BL/6J</strain>
    </source>
</reference>
<reference key="3">
    <citation type="journal article" date="2004" name="J. Biol. Chem.">
        <title>NEDL1, a novel ubiquitin-protein isopeptide ligase for dishevelled-1, targets mutant superoxide dismutase-1.</title>
        <authorList>
            <person name="Miyazaki K."/>
            <person name="Fujita T."/>
            <person name="Ozaki T."/>
            <person name="Kato C."/>
            <person name="Kurose Y."/>
            <person name="Sakamoto M."/>
            <person name="Kato S."/>
            <person name="Goto T."/>
            <person name="Itoyama Y."/>
            <person name="Aoki M."/>
            <person name="Nakagawara A."/>
        </authorList>
    </citation>
    <scope>NUCLEOTIDE SEQUENCE [MRNA] OF 22-1604 (ISOFORM 1)</scope>
    <scope>FUNCTION</scope>
    <scope>SUBCELLULAR LOCATION</scope>
</reference>
<reference key="4">
    <citation type="journal article" date="2004" name="DNA Res.">
        <title>Prediction of the coding sequences of mouse homologues of KIAA gene: IV. The complete nucleotide sequences of 500 mouse KIAA-homologous cDNAs identified by screening of terminal sequences of cDNA clones randomly sampled from size-fractionated libraries.</title>
        <authorList>
            <person name="Okazaki N."/>
            <person name="Kikuno R."/>
            <person name="Ohara R."/>
            <person name="Inamoto S."/>
            <person name="Koseki H."/>
            <person name="Hiraoka S."/>
            <person name="Saga Y."/>
            <person name="Seino S."/>
            <person name="Nishimura M."/>
            <person name="Kaisho T."/>
            <person name="Hoshino K."/>
            <person name="Kitamura H."/>
            <person name="Nagase T."/>
            <person name="Ohara O."/>
            <person name="Koga H."/>
        </authorList>
    </citation>
    <scope>NUCLEOTIDE SEQUENCE [LARGE SCALE MRNA] OF 414-1604 (ISOFORM 2)</scope>
    <source>
        <tissue>Brain</tissue>
    </source>
</reference>
<reference key="5">
    <citation type="journal article" date="2006" name="Mol. Cell. Proteomics">
        <title>Comprehensive identification of phosphorylation sites in postsynaptic density preparations.</title>
        <authorList>
            <person name="Trinidad J.C."/>
            <person name="Specht C.G."/>
            <person name="Thalhammer A."/>
            <person name="Schoepfer R."/>
            <person name="Burlingame A.L."/>
        </authorList>
    </citation>
    <scope>IDENTIFICATION BY MASS SPECTROMETRY [LARGE SCALE ANALYSIS]</scope>
    <source>
        <tissue>Brain</tissue>
    </source>
</reference>
<reference key="6">
    <citation type="journal article" date="2010" name="Cell">
        <title>A tissue-specific atlas of mouse protein phosphorylation and expression.</title>
        <authorList>
            <person name="Huttlin E.L."/>
            <person name="Jedrychowski M.P."/>
            <person name="Elias J.E."/>
            <person name="Goswami T."/>
            <person name="Rad R."/>
            <person name="Beausoleil S.A."/>
            <person name="Villen J."/>
            <person name="Haas W."/>
            <person name="Sowa M.E."/>
            <person name="Gygi S.P."/>
        </authorList>
    </citation>
    <scope>PHOSPHORYLATION [LARGE SCALE ANALYSIS] AT SER-871; SER-935 AND SER-937</scope>
    <scope>IDENTIFICATION BY MASS SPECTROMETRY [LARGE SCALE ANALYSIS]</scope>
    <source>
        <tissue>Brain</tissue>
    </source>
</reference>
<dbReference type="EC" id="2.3.2.26"/>
<dbReference type="EMBL" id="AK033922">
    <property type="protein sequence ID" value="BAC28516.1"/>
    <property type="status" value="ALT_INIT"/>
    <property type="molecule type" value="mRNA"/>
</dbReference>
<dbReference type="EMBL" id="AK047678">
    <property type="protein sequence ID" value="BAC33122.1"/>
    <property type="molecule type" value="mRNA"/>
</dbReference>
<dbReference type="EMBL" id="AK051569">
    <property type="protein sequence ID" value="BAC34677.1"/>
    <property type="molecule type" value="mRNA"/>
</dbReference>
<dbReference type="EMBL" id="AK053694">
    <property type="protein sequence ID" value="BAC35477.1"/>
    <property type="molecule type" value="mRNA"/>
</dbReference>
<dbReference type="EMBL" id="AC092710">
    <property type="status" value="NOT_ANNOTATED_CDS"/>
    <property type="molecule type" value="Genomic_DNA"/>
</dbReference>
<dbReference type="EMBL" id="AC154511">
    <property type="status" value="NOT_ANNOTATED_CDS"/>
    <property type="molecule type" value="Genomic_DNA"/>
</dbReference>
<dbReference type="EMBL" id="AC154615">
    <property type="status" value="NOT_ANNOTATED_CDS"/>
    <property type="molecule type" value="Genomic_DNA"/>
</dbReference>
<dbReference type="EMBL" id="AC161249">
    <property type="status" value="NOT_ANNOTATED_CDS"/>
    <property type="molecule type" value="Genomic_DNA"/>
</dbReference>
<dbReference type="EMBL" id="CT025604">
    <property type="status" value="NOT_ANNOTATED_CDS"/>
    <property type="molecule type" value="Genomic_DNA"/>
</dbReference>
<dbReference type="EMBL" id="AB083710">
    <property type="protein sequence ID" value="BAB97389.1"/>
    <property type="molecule type" value="mRNA"/>
</dbReference>
<dbReference type="EMBL" id="AK172932">
    <property type="protein sequence ID" value="BAD32210.1"/>
    <property type="molecule type" value="mRNA"/>
</dbReference>
<dbReference type="CCDS" id="CCDS49207.1">
    <molecule id="Q8K4P8-1"/>
</dbReference>
<dbReference type="RefSeq" id="NP_001074817.3">
    <molecule id="Q8K4P8-1"/>
    <property type="nucleotide sequence ID" value="NM_001081348.3"/>
</dbReference>
<dbReference type="RefSeq" id="XP_006516873.1">
    <molecule id="Q8K4P8-1"/>
    <property type="nucleotide sequence ID" value="XM_006516810.5"/>
</dbReference>
<dbReference type="RefSeq" id="XP_006516874.1">
    <molecule id="Q8K4P8-1"/>
    <property type="nucleotide sequence ID" value="XM_006516811.3"/>
</dbReference>
<dbReference type="RefSeq" id="XP_006516875.1">
    <molecule id="Q8K4P8-1"/>
    <property type="nucleotide sequence ID" value="XM_006516812.5"/>
</dbReference>
<dbReference type="SMR" id="Q8K4P8"/>
<dbReference type="BioGRID" id="220495">
    <property type="interactions" value="3"/>
</dbReference>
<dbReference type="FunCoup" id="Q8K4P8">
    <property type="interactions" value="674"/>
</dbReference>
<dbReference type="IntAct" id="Q8K4P8">
    <property type="interactions" value="3"/>
</dbReference>
<dbReference type="MINT" id="Q8K4P8"/>
<dbReference type="STRING" id="10090.ENSMUSP00000106145"/>
<dbReference type="GlyGen" id="Q8K4P8">
    <property type="glycosylation" value="1 site, 1 N-linked glycan (1 site)"/>
</dbReference>
<dbReference type="iPTMnet" id="Q8K4P8"/>
<dbReference type="PhosphoSitePlus" id="Q8K4P8"/>
<dbReference type="PaxDb" id="10090-ENSMUSP00000106145"/>
<dbReference type="PeptideAtlas" id="Q8K4P8"/>
<dbReference type="ProteomicsDB" id="269687">
    <molecule id="Q8K4P8-1"/>
</dbReference>
<dbReference type="ProteomicsDB" id="269688">
    <molecule id="Q8K4P8-2"/>
</dbReference>
<dbReference type="ProteomicsDB" id="269689">
    <molecule id="Q8K4P8-3"/>
</dbReference>
<dbReference type="ProteomicsDB" id="269690">
    <molecule id="Q8K4P8-4"/>
</dbReference>
<dbReference type="Antibodypedia" id="1996">
    <property type="antibodies" value="48 antibodies from 15 providers"/>
</dbReference>
<dbReference type="DNASU" id="94253"/>
<dbReference type="Ensembl" id="ENSMUST00000110516.3">
    <molecule id="Q8K4P8-1"/>
    <property type="protein sequence ID" value="ENSMUSP00000106145.3"/>
    <property type="gene ID" value="ENSMUSG00000021301.10"/>
</dbReference>
<dbReference type="GeneID" id="94253"/>
<dbReference type="KEGG" id="mmu:94253"/>
<dbReference type="UCSC" id="uc007pnd.2">
    <molecule id="Q8K4P8-1"/>
    <property type="organism name" value="mouse"/>
</dbReference>
<dbReference type="UCSC" id="uc007png.2">
    <molecule id="Q8K4P8-4"/>
    <property type="organism name" value="mouse"/>
</dbReference>
<dbReference type="UCSC" id="uc007pnh.2">
    <molecule id="Q8K4P8-3"/>
    <property type="organism name" value="mouse"/>
</dbReference>
<dbReference type="UCSC" id="uc011ywk.1">
    <molecule id="Q8K4P8-2"/>
    <property type="organism name" value="mouse"/>
</dbReference>
<dbReference type="AGR" id="MGI:2444115"/>
<dbReference type="CTD" id="23072"/>
<dbReference type="MGI" id="MGI:2444115">
    <property type="gene designation" value="Hecw1"/>
</dbReference>
<dbReference type="VEuPathDB" id="HostDB:ENSMUSG00000021301"/>
<dbReference type="eggNOG" id="KOG0940">
    <property type="taxonomic scope" value="Eukaryota"/>
</dbReference>
<dbReference type="GeneTree" id="ENSGT00940000158294"/>
<dbReference type="HOGENOM" id="CLU_002173_14_0_1"/>
<dbReference type="InParanoid" id="Q8K4P8"/>
<dbReference type="OMA" id="SGSQNCE"/>
<dbReference type="OrthoDB" id="5987976at2759"/>
<dbReference type="PhylomeDB" id="Q8K4P8"/>
<dbReference type="TreeFam" id="TF313938"/>
<dbReference type="Reactome" id="R-MMU-4641258">
    <property type="pathway name" value="Degradation of DVL"/>
</dbReference>
<dbReference type="UniPathway" id="UPA00143"/>
<dbReference type="BioGRID-ORCS" id="94253">
    <property type="hits" value="4 hits in 78 CRISPR screens"/>
</dbReference>
<dbReference type="PRO" id="PR:Q8K4P8"/>
<dbReference type="Proteomes" id="UP000000589">
    <property type="component" value="Chromosome 13"/>
</dbReference>
<dbReference type="RNAct" id="Q8K4P8">
    <property type="molecule type" value="protein"/>
</dbReference>
<dbReference type="Bgee" id="ENSMUSG00000021301">
    <property type="expression patterns" value="Expressed in cortical plate and 116 other cell types or tissues"/>
</dbReference>
<dbReference type="ExpressionAtlas" id="Q8K4P8">
    <property type="expression patterns" value="baseline and differential"/>
</dbReference>
<dbReference type="GO" id="GO:0005737">
    <property type="term" value="C:cytoplasm"/>
    <property type="evidence" value="ECO:0007669"/>
    <property type="project" value="UniProtKB-SubCell"/>
</dbReference>
<dbReference type="GO" id="GO:0004842">
    <property type="term" value="F:ubiquitin-protein transferase activity"/>
    <property type="evidence" value="ECO:0007669"/>
    <property type="project" value="InterPro"/>
</dbReference>
<dbReference type="GO" id="GO:0016567">
    <property type="term" value="P:protein ubiquitination"/>
    <property type="evidence" value="ECO:0007669"/>
    <property type="project" value="UniProtKB-UniPathway"/>
</dbReference>
<dbReference type="CDD" id="cd08691">
    <property type="entry name" value="C2_NEDL1-like"/>
    <property type="match status" value="1"/>
</dbReference>
<dbReference type="CDD" id="cd00078">
    <property type="entry name" value="HECTc"/>
    <property type="match status" value="1"/>
</dbReference>
<dbReference type="CDD" id="cd00201">
    <property type="entry name" value="WW"/>
    <property type="match status" value="2"/>
</dbReference>
<dbReference type="FunFam" id="3.30.2410.10:FF:000002">
    <property type="entry name" value="E3 ubiquitin-protein ligase HECW2"/>
    <property type="match status" value="1"/>
</dbReference>
<dbReference type="FunFam" id="3.90.1750.10:FF:000036">
    <property type="entry name" value="E3 ubiquitin-protein ligase HECW2"/>
    <property type="match status" value="1"/>
</dbReference>
<dbReference type="FunFam" id="2.20.70.10:FF:000007">
    <property type="entry name" value="E3 ubiquitin-protein ligase HECW2 isoform X1"/>
    <property type="match status" value="1"/>
</dbReference>
<dbReference type="FunFam" id="2.60.40.2840:FF:000001">
    <property type="entry name" value="E3 ubiquitin-protein ligase HECW2 isoform X1"/>
    <property type="match status" value="1"/>
</dbReference>
<dbReference type="FunFam" id="3.30.2160.10:FF:000005">
    <property type="entry name" value="E3 ubiquitin-protein ligase HECW2 isoform X1"/>
    <property type="match status" value="1"/>
</dbReference>
<dbReference type="FunFam" id="3.90.1750.10:FF:000004">
    <property type="entry name" value="E3 ubiquitin-protein ligase HECW2 isoform X1"/>
    <property type="match status" value="1"/>
</dbReference>
<dbReference type="FunFam" id="2.20.70.10:FF:000048">
    <property type="entry name" value="HECT, C2 and WW domain-containing E3 ubiquitin protein ligase 1"/>
    <property type="match status" value="1"/>
</dbReference>
<dbReference type="FunFam" id="2.60.40.150:FF:000035">
    <property type="entry name" value="LOW QUALITY PROTEIN: E3 ubiquitin-protein ligase HECW2"/>
    <property type="match status" value="1"/>
</dbReference>
<dbReference type="Gene3D" id="2.20.70.10">
    <property type="match status" value="2"/>
</dbReference>
<dbReference type="Gene3D" id="2.60.40.2840">
    <property type="match status" value="1"/>
</dbReference>
<dbReference type="Gene3D" id="2.60.40.150">
    <property type="entry name" value="C2 domain"/>
    <property type="match status" value="1"/>
</dbReference>
<dbReference type="Gene3D" id="3.30.2160.10">
    <property type="entry name" value="Hect, E3 ligase catalytic domain"/>
    <property type="match status" value="1"/>
</dbReference>
<dbReference type="Gene3D" id="3.30.2410.10">
    <property type="entry name" value="Hect, E3 ligase catalytic domain"/>
    <property type="match status" value="1"/>
</dbReference>
<dbReference type="Gene3D" id="3.90.1750.10">
    <property type="entry name" value="Hect, E3 ligase catalytic domains"/>
    <property type="match status" value="1"/>
</dbReference>
<dbReference type="InterPro" id="IPR000008">
    <property type="entry name" value="C2_dom"/>
</dbReference>
<dbReference type="InterPro" id="IPR035892">
    <property type="entry name" value="C2_domain_sf"/>
</dbReference>
<dbReference type="InterPro" id="IPR037795">
    <property type="entry name" value="C2_HECW"/>
</dbReference>
<dbReference type="InterPro" id="IPR050409">
    <property type="entry name" value="E3_ubiq-protein_ligase"/>
</dbReference>
<dbReference type="InterPro" id="IPR000569">
    <property type="entry name" value="HECT_dom"/>
</dbReference>
<dbReference type="InterPro" id="IPR035983">
    <property type="entry name" value="Hect_E3_ubiquitin_ligase"/>
</dbReference>
<dbReference type="InterPro" id="IPR040524">
    <property type="entry name" value="HECW1_helix"/>
</dbReference>
<dbReference type="InterPro" id="IPR032348">
    <property type="entry name" value="HECW_N"/>
</dbReference>
<dbReference type="InterPro" id="IPR001202">
    <property type="entry name" value="WW_dom"/>
</dbReference>
<dbReference type="InterPro" id="IPR036020">
    <property type="entry name" value="WW_dom_sf"/>
</dbReference>
<dbReference type="PANTHER" id="PTHR11254:SF79">
    <property type="entry name" value="E3 UBIQUITIN-PROTEIN LIGASE HECW1"/>
    <property type="match status" value="1"/>
</dbReference>
<dbReference type="PANTHER" id="PTHR11254">
    <property type="entry name" value="HECT DOMAIN UBIQUITIN-PROTEIN LIGASE"/>
    <property type="match status" value="1"/>
</dbReference>
<dbReference type="Pfam" id="PF00168">
    <property type="entry name" value="C2"/>
    <property type="match status" value="1"/>
</dbReference>
<dbReference type="Pfam" id="PF00632">
    <property type="entry name" value="HECT"/>
    <property type="match status" value="1"/>
</dbReference>
<dbReference type="Pfam" id="PF18436">
    <property type="entry name" value="HECW1_helix"/>
    <property type="match status" value="1"/>
</dbReference>
<dbReference type="Pfam" id="PF16562">
    <property type="entry name" value="HECW_N"/>
    <property type="match status" value="1"/>
</dbReference>
<dbReference type="Pfam" id="PF00397">
    <property type="entry name" value="WW"/>
    <property type="match status" value="1"/>
</dbReference>
<dbReference type="SMART" id="SM00239">
    <property type="entry name" value="C2"/>
    <property type="match status" value="1"/>
</dbReference>
<dbReference type="SMART" id="SM00119">
    <property type="entry name" value="HECTc"/>
    <property type="match status" value="1"/>
</dbReference>
<dbReference type="SMART" id="SM00456">
    <property type="entry name" value="WW"/>
    <property type="match status" value="2"/>
</dbReference>
<dbReference type="SUPFAM" id="SSF49562">
    <property type="entry name" value="C2 domain (Calcium/lipid-binding domain, CaLB)"/>
    <property type="match status" value="1"/>
</dbReference>
<dbReference type="SUPFAM" id="SSF56204">
    <property type="entry name" value="Hect, E3 ligase catalytic domain"/>
    <property type="match status" value="1"/>
</dbReference>
<dbReference type="SUPFAM" id="SSF51045">
    <property type="entry name" value="WW domain"/>
    <property type="match status" value="2"/>
</dbReference>
<dbReference type="PROSITE" id="PS50004">
    <property type="entry name" value="C2"/>
    <property type="match status" value="1"/>
</dbReference>
<dbReference type="PROSITE" id="PS50237">
    <property type="entry name" value="HECT"/>
    <property type="match status" value="1"/>
</dbReference>
<dbReference type="PROSITE" id="PS01159">
    <property type="entry name" value="WW_DOMAIN_1"/>
    <property type="match status" value="2"/>
</dbReference>
<dbReference type="PROSITE" id="PS50020">
    <property type="entry name" value="WW_DOMAIN_2"/>
    <property type="match status" value="2"/>
</dbReference>